<proteinExistence type="evidence at transcript level"/>
<reference key="1">
    <citation type="journal article" date="2000" name="Science">
        <title>The genome sequence of Drosophila melanogaster.</title>
        <authorList>
            <person name="Adams M.D."/>
            <person name="Celniker S.E."/>
            <person name="Holt R.A."/>
            <person name="Evans C.A."/>
            <person name="Gocayne J.D."/>
            <person name="Amanatides P.G."/>
            <person name="Scherer S.E."/>
            <person name="Li P.W."/>
            <person name="Hoskins R.A."/>
            <person name="Galle R.F."/>
            <person name="George R.A."/>
            <person name="Lewis S.E."/>
            <person name="Richards S."/>
            <person name="Ashburner M."/>
            <person name="Henderson S.N."/>
            <person name="Sutton G.G."/>
            <person name="Wortman J.R."/>
            <person name="Yandell M.D."/>
            <person name="Zhang Q."/>
            <person name="Chen L.X."/>
            <person name="Brandon R.C."/>
            <person name="Rogers Y.-H.C."/>
            <person name="Blazej R.G."/>
            <person name="Champe M."/>
            <person name="Pfeiffer B.D."/>
            <person name="Wan K.H."/>
            <person name="Doyle C."/>
            <person name="Baxter E.G."/>
            <person name="Helt G."/>
            <person name="Nelson C.R."/>
            <person name="Miklos G.L.G."/>
            <person name="Abril J.F."/>
            <person name="Agbayani A."/>
            <person name="An H.-J."/>
            <person name="Andrews-Pfannkoch C."/>
            <person name="Baldwin D."/>
            <person name="Ballew R.M."/>
            <person name="Basu A."/>
            <person name="Baxendale J."/>
            <person name="Bayraktaroglu L."/>
            <person name="Beasley E.M."/>
            <person name="Beeson K.Y."/>
            <person name="Benos P.V."/>
            <person name="Berman B.P."/>
            <person name="Bhandari D."/>
            <person name="Bolshakov S."/>
            <person name="Borkova D."/>
            <person name="Botchan M.R."/>
            <person name="Bouck J."/>
            <person name="Brokstein P."/>
            <person name="Brottier P."/>
            <person name="Burtis K.C."/>
            <person name="Busam D.A."/>
            <person name="Butler H."/>
            <person name="Cadieu E."/>
            <person name="Center A."/>
            <person name="Chandra I."/>
            <person name="Cherry J.M."/>
            <person name="Cawley S."/>
            <person name="Dahlke C."/>
            <person name="Davenport L.B."/>
            <person name="Davies P."/>
            <person name="de Pablos B."/>
            <person name="Delcher A."/>
            <person name="Deng Z."/>
            <person name="Mays A.D."/>
            <person name="Dew I."/>
            <person name="Dietz S.M."/>
            <person name="Dodson K."/>
            <person name="Doup L.E."/>
            <person name="Downes M."/>
            <person name="Dugan-Rocha S."/>
            <person name="Dunkov B.C."/>
            <person name="Dunn P."/>
            <person name="Durbin K.J."/>
            <person name="Evangelista C.C."/>
            <person name="Ferraz C."/>
            <person name="Ferriera S."/>
            <person name="Fleischmann W."/>
            <person name="Fosler C."/>
            <person name="Gabrielian A.E."/>
            <person name="Garg N.S."/>
            <person name="Gelbart W.M."/>
            <person name="Glasser K."/>
            <person name="Glodek A."/>
            <person name="Gong F."/>
            <person name="Gorrell J.H."/>
            <person name="Gu Z."/>
            <person name="Guan P."/>
            <person name="Harris M."/>
            <person name="Harris N.L."/>
            <person name="Harvey D.A."/>
            <person name="Heiman T.J."/>
            <person name="Hernandez J.R."/>
            <person name="Houck J."/>
            <person name="Hostin D."/>
            <person name="Houston K.A."/>
            <person name="Howland T.J."/>
            <person name="Wei M.-H."/>
            <person name="Ibegwam C."/>
            <person name="Jalali M."/>
            <person name="Kalush F."/>
            <person name="Karpen G.H."/>
            <person name="Ke Z."/>
            <person name="Kennison J.A."/>
            <person name="Ketchum K.A."/>
            <person name="Kimmel B.E."/>
            <person name="Kodira C.D."/>
            <person name="Kraft C.L."/>
            <person name="Kravitz S."/>
            <person name="Kulp D."/>
            <person name="Lai Z."/>
            <person name="Lasko P."/>
            <person name="Lei Y."/>
            <person name="Levitsky A.A."/>
            <person name="Li J.H."/>
            <person name="Li Z."/>
            <person name="Liang Y."/>
            <person name="Lin X."/>
            <person name="Liu X."/>
            <person name="Mattei B."/>
            <person name="McIntosh T.C."/>
            <person name="McLeod M.P."/>
            <person name="McPherson D."/>
            <person name="Merkulov G."/>
            <person name="Milshina N.V."/>
            <person name="Mobarry C."/>
            <person name="Morris J."/>
            <person name="Moshrefi A."/>
            <person name="Mount S.M."/>
            <person name="Moy M."/>
            <person name="Murphy B."/>
            <person name="Murphy L."/>
            <person name="Muzny D.M."/>
            <person name="Nelson D.L."/>
            <person name="Nelson D.R."/>
            <person name="Nelson K.A."/>
            <person name="Nixon K."/>
            <person name="Nusskern D.R."/>
            <person name="Pacleb J.M."/>
            <person name="Palazzolo M."/>
            <person name="Pittman G.S."/>
            <person name="Pan S."/>
            <person name="Pollard J."/>
            <person name="Puri V."/>
            <person name="Reese M.G."/>
            <person name="Reinert K."/>
            <person name="Remington K."/>
            <person name="Saunders R.D.C."/>
            <person name="Scheeler F."/>
            <person name="Shen H."/>
            <person name="Shue B.C."/>
            <person name="Siden-Kiamos I."/>
            <person name="Simpson M."/>
            <person name="Skupski M.P."/>
            <person name="Smith T.J."/>
            <person name="Spier E."/>
            <person name="Spradling A.C."/>
            <person name="Stapleton M."/>
            <person name="Strong R."/>
            <person name="Sun E."/>
            <person name="Svirskas R."/>
            <person name="Tector C."/>
            <person name="Turner R."/>
            <person name="Venter E."/>
            <person name="Wang A.H."/>
            <person name="Wang X."/>
            <person name="Wang Z.-Y."/>
            <person name="Wassarman D.A."/>
            <person name="Weinstock G.M."/>
            <person name="Weissenbach J."/>
            <person name="Williams S.M."/>
            <person name="Woodage T."/>
            <person name="Worley K.C."/>
            <person name="Wu D."/>
            <person name="Yang S."/>
            <person name="Yao Q.A."/>
            <person name="Ye J."/>
            <person name="Yeh R.-F."/>
            <person name="Zaveri J.S."/>
            <person name="Zhan M."/>
            <person name="Zhang G."/>
            <person name="Zhao Q."/>
            <person name="Zheng L."/>
            <person name="Zheng X.H."/>
            <person name="Zhong F.N."/>
            <person name="Zhong W."/>
            <person name="Zhou X."/>
            <person name="Zhu S.C."/>
            <person name="Zhu X."/>
            <person name="Smith H.O."/>
            <person name="Gibbs R.A."/>
            <person name="Myers E.W."/>
            <person name="Rubin G.M."/>
            <person name="Venter J.C."/>
        </authorList>
    </citation>
    <scope>NUCLEOTIDE SEQUENCE [LARGE SCALE GENOMIC DNA]</scope>
    <source>
        <strain>Berkeley</strain>
    </source>
</reference>
<reference key="2">
    <citation type="journal article" date="2002" name="Genome Biol.">
        <title>Annotation of the Drosophila melanogaster euchromatic genome: a systematic review.</title>
        <authorList>
            <person name="Misra S."/>
            <person name="Crosby M.A."/>
            <person name="Mungall C.J."/>
            <person name="Matthews B.B."/>
            <person name="Campbell K.S."/>
            <person name="Hradecky P."/>
            <person name="Huang Y."/>
            <person name="Kaminker J.S."/>
            <person name="Millburn G.H."/>
            <person name="Prochnik S.E."/>
            <person name="Smith C.D."/>
            <person name="Tupy J.L."/>
            <person name="Whitfield E.J."/>
            <person name="Bayraktaroglu L."/>
            <person name="Berman B.P."/>
            <person name="Bettencourt B.R."/>
            <person name="Celniker S.E."/>
            <person name="de Grey A.D.N.J."/>
            <person name="Drysdale R.A."/>
            <person name="Harris N.L."/>
            <person name="Richter J."/>
            <person name="Russo S."/>
            <person name="Schroeder A.J."/>
            <person name="Shu S.Q."/>
            <person name="Stapleton M."/>
            <person name="Yamada C."/>
            <person name="Ashburner M."/>
            <person name="Gelbart W.M."/>
            <person name="Rubin G.M."/>
            <person name="Lewis S.E."/>
        </authorList>
    </citation>
    <scope>GENOME REANNOTATION</scope>
    <scope>ALTERNATIVE SPLICING</scope>
    <source>
        <strain>Berkeley</strain>
    </source>
</reference>
<reference key="3">
    <citation type="journal article" date="2001" name="Curr. Biol.">
        <title>Spatially restricted expression of candidate taste receptors in the Drosophila gustatory system.</title>
        <authorList>
            <person name="Dunipace L."/>
            <person name="Meister S."/>
            <person name="McNealy C."/>
            <person name="Amrein H."/>
        </authorList>
    </citation>
    <scope>IDENTIFICATION</scope>
</reference>
<reference key="4">
    <citation type="journal article" date="2008" name="J. Comp. Neurol.">
        <title>Atypical expression of Drosophila gustatory receptor genes in sensory and central neurons.</title>
        <authorList>
            <person name="Thorne N."/>
            <person name="Amrein H."/>
        </authorList>
    </citation>
    <scope>TISSUE SPECIFICITY</scope>
    <scope>FUNCTION</scope>
</reference>
<reference key="5">
    <citation type="journal article" date="2011" name="J. Neurosci.">
        <title>Molecular and cellular organization of the taste system in the Drosophila larva.</title>
        <authorList>
            <person name="Kwon J.Y."/>
            <person name="Dahanukar A."/>
            <person name="Weiss L.A."/>
            <person name="Carlson J.R."/>
        </authorList>
    </citation>
    <scope>TISSUE SPECIFICITY</scope>
</reference>
<reference key="6">
    <citation type="journal article" date="2011" name="PLoS ONE">
        <title>Heterogeneous expression of Drosophila gustatory receptors in enteroendocrine cells.</title>
        <authorList>
            <person name="Park J.H."/>
            <person name="Kwon J.Y."/>
        </authorList>
    </citation>
    <scope>TISSUE SPECIFICITY</scope>
</reference>
<sequence>MDIEMAKEPVNPTDTPDIEVTPGLCQPLRRRFRRFVTAKQLYECLRPVFHVTYIHGLTSFYISCDTKTGKKAIKKTIFGYINGIMHIAMFVFAYSLTIYNNCESVASYFFRSRITYFGDLMQIVSGFIGVTVIYLTAFVPNHRLERCLQKFHTMDVQLQTVGVKIMYSKVLRFSYMVLISMFLVNVLFTGGTFSVLYSSEVAPTMALHFTFLIQHTVIAIAIALFSCFTYLVEMRLVMVNKVLKNLAHQWDTRSLKAVNQKQRSLQCLDSFSMYTIVTKDPAEIIQESMEIHHLICEAAATANKYFTYQLLTIISIAFLIIVFDAYYVLETLLGKSKRESKFKTVEFVTFFSCQMILYLIAIISIVEGSNRAIKKSEKTGGIVHSLLNKTKSAEVKEKLQQFSMQLMHLKINFTAAGLFNIDRTLYFTISGALTTYLIILLQFTSNSPNNGYGNGSSCCETFNNMTNHTL</sequence>
<name>GR28B_DROME</name>
<gene>
    <name type="primary">Gr28b</name>
    <name type="ORF">CG13788</name>
</gene>
<protein>
    <recommendedName>
        <fullName>Putative gustatory receptor 28b</fullName>
    </recommendedName>
</protein>
<dbReference type="EMBL" id="AE014134">
    <property type="protein sequence ID" value="AAF52520.2"/>
    <property type="molecule type" value="Genomic_DNA"/>
</dbReference>
<dbReference type="EMBL" id="AE014134">
    <property type="protein sequence ID" value="AAS64648.1"/>
    <property type="molecule type" value="Genomic_DNA"/>
</dbReference>
<dbReference type="EMBL" id="AE014134">
    <property type="protein sequence ID" value="AAS64649.1"/>
    <property type="molecule type" value="Genomic_DNA"/>
</dbReference>
<dbReference type="EMBL" id="AE014134">
    <property type="protein sequence ID" value="AAS64650.1"/>
    <property type="molecule type" value="Genomic_DNA"/>
</dbReference>
<dbReference type="EMBL" id="AE014134">
    <property type="protein sequence ID" value="AAS64651.1"/>
    <property type="molecule type" value="Genomic_DNA"/>
</dbReference>
<dbReference type="RefSeq" id="NP_647614.2">
    <molecule id="Q9VM08-2"/>
    <property type="nucleotide sequence ID" value="NM_139357.4"/>
</dbReference>
<dbReference type="RefSeq" id="NP_995640.1">
    <molecule id="Q9VM08-5"/>
    <property type="nucleotide sequence ID" value="NM_205918.3"/>
</dbReference>
<dbReference type="RefSeq" id="NP_995641.1">
    <molecule id="Q9VM08-4"/>
    <property type="nucleotide sequence ID" value="NM_205919.3"/>
</dbReference>
<dbReference type="RefSeq" id="NP_995642.1">
    <molecule id="Q9VM08-1"/>
    <property type="nucleotide sequence ID" value="NM_205920.3"/>
</dbReference>
<dbReference type="RefSeq" id="NP_995643.1">
    <molecule id="Q9VM08-3"/>
    <property type="nucleotide sequence ID" value="NM_205921.3"/>
</dbReference>
<dbReference type="SMR" id="Q9VM08"/>
<dbReference type="BioGRID" id="72917">
    <property type="interactions" value="2"/>
</dbReference>
<dbReference type="FunCoup" id="Q9VM08">
    <property type="interactions" value="7"/>
</dbReference>
<dbReference type="IntAct" id="Q9VM08">
    <property type="interactions" value="4"/>
</dbReference>
<dbReference type="STRING" id="7227.FBpp0089145"/>
<dbReference type="TCDB" id="1.A.69.3.3">
    <property type="family name" value="the heteromeric odorant receptor channel (horc) family"/>
</dbReference>
<dbReference type="GlyCosmos" id="Q9VM08">
    <property type="glycosylation" value="3 sites, No reported glycans"/>
</dbReference>
<dbReference type="GlyGen" id="Q9VM08">
    <property type="glycosylation" value="3 sites"/>
</dbReference>
<dbReference type="PaxDb" id="7227-FBpp0089145"/>
<dbReference type="DNASU" id="117496"/>
<dbReference type="EnsemblMetazoa" id="FBtr0079458">
    <molecule id="Q9VM08-2"/>
    <property type="protein sequence ID" value="FBpp0079086"/>
    <property type="gene ID" value="FBgn0045495"/>
</dbReference>
<dbReference type="EnsemblMetazoa" id="FBtr0079459">
    <molecule id="Q9VM08-3"/>
    <property type="protein sequence ID" value="FBpp0089144"/>
    <property type="gene ID" value="FBgn0045495"/>
</dbReference>
<dbReference type="EnsemblMetazoa" id="FBtr0079460">
    <molecule id="Q9VM08-1"/>
    <property type="protein sequence ID" value="FBpp0089145"/>
    <property type="gene ID" value="FBgn0045495"/>
</dbReference>
<dbReference type="EnsemblMetazoa" id="FBtr0079461">
    <molecule id="Q9VM08-4"/>
    <property type="protein sequence ID" value="FBpp0089142"/>
    <property type="gene ID" value="FBgn0045495"/>
</dbReference>
<dbReference type="EnsemblMetazoa" id="FBtr0079462">
    <molecule id="Q9VM08-5"/>
    <property type="protein sequence ID" value="FBpp0089143"/>
    <property type="gene ID" value="FBgn0045495"/>
</dbReference>
<dbReference type="GeneID" id="117496"/>
<dbReference type="KEGG" id="dme:Dmel_CG13788"/>
<dbReference type="AGR" id="FB:FBgn0045495"/>
<dbReference type="CTD" id="117496"/>
<dbReference type="FlyBase" id="FBgn0045495">
    <property type="gene designation" value="Gr28b"/>
</dbReference>
<dbReference type="VEuPathDB" id="VectorBase:FBgn0045495"/>
<dbReference type="eggNOG" id="ENOG502S2QD">
    <property type="taxonomic scope" value="Eukaryota"/>
</dbReference>
<dbReference type="GeneTree" id="ENSGT00940000166130"/>
<dbReference type="InParanoid" id="Q9VM08"/>
<dbReference type="OMA" id="WHAIKIQ"/>
<dbReference type="OrthoDB" id="6366728at2759"/>
<dbReference type="PhylomeDB" id="Q9VM08"/>
<dbReference type="SignaLink" id="Q9VM08"/>
<dbReference type="BioGRID-ORCS" id="117496">
    <property type="hits" value="0 hits in 1 CRISPR screen"/>
</dbReference>
<dbReference type="GenomeRNAi" id="117496"/>
<dbReference type="PRO" id="PR:Q9VM08"/>
<dbReference type="Proteomes" id="UP000000803">
    <property type="component" value="Chromosome 2L"/>
</dbReference>
<dbReference type="Bgee" id="FBgn0045495">
    <property type="expression patterns" value="Expressed in nociceptive neuron in imaginal disc-derived wing and 8 other cell types or tissues"/>
</dbReference>
<dbReference type="ExpressionAtlas" id="Q9VM08">
    <property type="expression patterns" value="baseline and differential"/>
</dbReference>
<dbReference type="GO" id="GO:0030424">
    <property type="term" value="C:axon"/>
    <property type="evidence" value="ECO:0000318"/>
    <property type="project" value="GO_Central"/>
</dbReference>
<dbReference type="GO" id="GO:0030425">
    <property type="term" value="C:dendrite"/>
    <property type="evidence" value="ECO:0000318"/>
    <property type="project" value="GO_Central"/>
</dbReference>
<dbReference type="GO" id="GO:0016020">
    <property type="term" value="C:membrane"/>
    <property type="evidence" value="ECO:0000303"/>
    <property type="project" value="UniProtKB"/>
</dbReference>
<dbReference type="GO" id="GO:0043025">
    <property type="term" value="C:neuronal cell body"/>
    <property type="evidence" value="ECO:0000318"/>
    <property type="project" value="GO_Central"/>
</dbReference>
<dbReference type="GO" id="GO:0005886">
    <property type="term" value="C:plasma membrane"/>
    <property type="evidence" value="ECO:0000250"/>
    <property type="project" value="FlyBase"/>
</dbReference>
<dbReference type="GO" id="GO:0015276">
    <property type="term" value="F:ligand-gated monoatomic ion channel activity"/>
    <property type="evidence" value="ECO:0000250"/>
    <property type="project" value="FlyBase"/>
</dbReference>
<dbReference type="GO" id="GO:0008527">
    <property type="term" value="F:taste receptor activity"/>
    <property type="evidence" value="ECO:0000250"/>
    <property type="project" value="FlyBase"/>
</dbReference>
<dbReference type="GO" id="GO:0007635">
    <property type="term" value="P:chemosensory behavior"/>
    <property type="evidence" value="ECO:0000318"/>
    <property type="project" value="GO_Central"/>
</dbReference>
<dbReference type="GO" id="GO:0042742">
    <property type="term" value="P:defense response to bacterium"/>
    <property type="evidence" value="ECO:0000315"/>
    <property type="project" value="FlyBase"/>
</dbReference>
<dbReference type="GO" id="GO:0007631">
    <property type="term" value="P:feeding behavior"/>
    <property type="evidence" value="ECO:0000315"/>
    <property type="project" value="FlyBase"/>
</dbReference>
<dbReference type="GO" id="GO:0006955">
    <property type="term" value="P:immune response"/>
    <property type="evidence" value="ECO:0000315"/>
    <property type="project" value="FlyBase"/>
</dbReference>
<dbReference type="GO" id="GO:0008049">
    <property type="term" value="P:male courtship behavior"/>
    <property type="evidence" value="ECO:0000318"/>
    <property type="project" value="GO_Central"/>
</dbReference>
<dbReference type="GO" id="GO:0035006">
    <property type="term" value="P:melanization defense response"/>
    <property type="evidence" value="ECO:0000315"/>
    <property type="project" value="FlyBase"/>
</dbReference>
<dbReference type="GO" id="GO:0034220">
    <property type="term" value="P:monoatomic ion transmembrane transport"/>
    <property type="evidence" value="ECO:0000250"/>
    <property type="project" value="FlyBase"/>
</dbReference>
<dbReference type="GO" id="GO:0046957">
    <property type="term" value="P:negative phototaxis"/>
    <property type="evidence" value="ECO:0000315"/>
    <property type="project" value="FlyBase"/>
</dbReference>
<dbReference type="GO" id="GO:0007602">
    <property type="term" value="P:phototransduction"/>
    <property type="evidence" value="ECO:0000314"/>
    <property type="project" value="FlyBase"/>
</dbReference>
<dbReference type="GO" id="GO:0050909">
    <property type="term" value="P:sensory perception of taste"/>
    <property type="evidence" value="ECO:0000250"/>
    <property type="project" value="FlyBase"/>
</dbReference>
<dbReference type="GO" id="GO:0040040">
    <property type="term" value="P:thermosensory behavior"/>
    <property type="evidence" value="ECO:0000315"/>
    <property type="project" value="FlyBase"/>
</dbReference>
<dbReference type="InterPro" id="IPR013604">
    <property type="entry name" value="7TM_chemorcpt"/>
</dbReference>
<dbReference type="PANTHER" id="PTHR21143:SF104">
    <property type="entry name" value="GUSTATORY RECEPTOR 8A-RELATED"/>
    <property type="match status" value="1"/>
</dbReference>
<dbReference type="PANTHER" id="PTHR21143">
    <property type="entry name" value="INVERTEBRATE GUSTATORY RECEPTOR"/>
    <property type="match status" value="1"/>
</dbReference>
<dbReference type="Pfam" id="PF08395">
    <property type="entry name" value="7tm_7"/>
    <property type="match status" value="1"/>
</dbReference>
<comment type="function">
    <text evidence="1 3">Probable gustatory receptor which mediates acceptance or avoidance behavior, depending on its substrates (By similarity). Atypical expression also suggests nongustatory roles in the nervous system and tissues involved in proprioception, hygroreception, and other sensory modalities. It is also possible that it has chemosensory roles in the detection of internal ligands.</text>
</comment>
<comment type="subcellular location">
    <subcellularLocation>
        <location evidence="1">Cell membrane</location>
        <topology evidence="1">Multi-pass membrane protein</topology>
    </subcellularLocation>
</comment>
<comment type="alternative products">
    <event type="alternative splicing"/>
    <isoform>
        <id>Q9VM08-1</id>
        <name>C</name>
        <sequence type="displayed"/>
    </isoform>
    <isoform>
        <id>Q9VM08-2</id>
        <name>A</name>
        <sequence type="described" ref="VSP_002015 VSP_002019"/>
    </isoform>
    <isoform>
        <id>Q9VM08-3</id>
        <name>B</name>
        <sequence type="described" ref="VSP_002017 VSP_002020"/>
    </isoform>
    <isoform>
        <id>Q9VM08-4</id>
        <name>D</name>
        <sequence type="described" ref="VSP_002018 VSP_002021"/>
    </isoform>
    <isoform>
        <id>Q9VM08-5</id>
        <name>E</name>
        <sequence type="described" ref="VSP_002016 VSP_002022"/>
    </isoform>
</comment>
<comment type="tissue specificity">
    <text evidence="3 4 5">Isoforms A and E have taste neuron-specific expression restricted to the labial palps, the internal taste organs in the pharynx, and the legs. In addition to expression in a large number of taste neurons, isoform A is also expressed in a few nonchemosensory neurons, including the campaniform sensilla of the wing, leg stretch receptors, and multiple dendritic neurons in the abdomen. Isoform B is the only receptor not expressed in gustatory receptor neurons in the labellum. We observe expression of this receptor in a single large cell at the base of each maxillary palp, in campaniform sensilla of the wing, and multiple dendritic neurons in the abdomen. Isoform C is expressed by many gustatory receptor neurons in the labial palps, the pharyngeal taste clusters, and taste neurons in the legs. In addition, isoform C expressed in a single cell at the base of the maxillary palps, neurons in the Johnston's organ (JO), campaniform sensilla of the wing, stretch receptors and the femoral chordotonal organ of the legs, and multiple dendritic neurons in the abdomen. Isoform D is expressed in a small number of gustatory receptor neurons in the labial palps, the ventral cibarial sense organ (VCSO), and legs. Atypical expression is observed in three neurons in the arista, campaniform sensilla of the wing, stretch and femoral chordotonal organ receptors in the legs, and multiple dendritic neurons in the abdomen. In larvae, Isoform A is expressed in neurons of the terminal external chemosensory organ and the dorsal external chemosensory organ; and isoform E is expressed in neurons of the terminal external chemosensory organ.</text>
</comment>
<comment type="similarity">
    <text evidence="6">Belongs to the insect chemoreceptor superfamily. Gustatory receptor (GR) family. Gr66a subfamily.</text>
</comment>
<organism>
    <name type="scientific">Drosophila melanogaster</name>
    <name type="common">Fruit fly</name>
    <dbReference type="NCBI Taxonomy" id="7227"/>
    <lineage>
        <taxon>Eukaryota</taxon>
        <taxon>Metazoa</taxon>
        <taxon>Ecdysozoa</taxon>
        <taxon>Arthropoda</taxon>
        <taxon>Hexapoda</taxon>
        <taxon>Insecta</taxon>
        <taxon>Pterygota</taxon>
        <taxon>Neoptera</taxon>
        <taxon>Endopterygota</taxon>
        <taxon>Diptera</taxon>
        <taxon>Brachycera</taxon>
        <taxon>Muscomorpha</taxon>
        <taxon>Ephydroidea</taxon>
        <taxon>Drosophilidae</taxon>
        <taxon>Drosophila</taxon>
        <taxon>Sophophora</taxon>
    </lineage>
</organism>
<feature type="chain" id="PRO_0000216502" description="Putative gustatory receptor 28b">
    <location>
        <begin position="1"/>
        <end position="470"/>
    </location>
</feature>
<feature type="topological domain" description="Cytoplasmic" evidence="1">
    <location>
        <begin position="1"/>
        <end position="76"/>
    </location>
</feature>
<feature type="transmembrane region" description="Helical; Name=1" evidence="2">
    <location>
        <begin position="77"/>
        <end position="97"/>
    </location>
</feature>
<feature type="topological domain" description="Extracellular" evidence="1">
    <location>
        <begin position="98"/>
        <end position="119"/>
    </location>
</feature>
<feature type="transmembrane region" description="Helical; Name=2" evidence="2">
    <location>
        <begin position="120"/>
        <end position="140"/>
    </location>
</feature>
<feature type="topological domain" description="Cytoplasmic" evidence="1">
    <location>
        <begin position="141"/>
        <end position="175"/>
    </location>
</feature>
<feature type="transmembrane region" description="Helical; Name=3" evidence="2">
    <location>
        <begin position="176"/>
        <end position="196"/>
    </location>
</feature>
<feature type="topological domain" description="Extracellular" evidence="1">
    <location>
        <begin position="197"/>
        <end position="204"/>
    </location>
</feature>
<feature type="transmembrane region" description="Helical; Name=4" evidence="2">
    <location>
        <begin position="205"/>
        <end position="225"/>
    </location>
</feature>
<feature type="topological domain" description="Cytoplasmic" evidence="1">
    <location>
        <begin position="226"/>
        <end position="309"/>
    </location>
</feature>
<feature type="transmembrane region" description="Helical; Name=5" evidence="2">
    <location>
        <begin position="310"/>
        <end position="330"/>
    </location>
</feature>
<feature type="topological domain" description="Extracellular" evidence="1">
    <location>
        <begin position="331"/>
        <end position="346"/>
    </location>
</feature>
<feature type="transmembrane region" description="Helical; Name=6" evidence="2">
    <location>
        <begin position="347"/>
        <end position="367"/>
    </location>
</feature>
<feature type="topological domain" description="Cytoplasmic" evidence="1">
    <location>
        <begin position="368"/>
        <end position="423"/>
    </location>
</feature>
<feature type="transmembrane region" description="Helical; Name=7" evidence="2">
    <location>
        <begin position="424"/>
        <end position="444"/>
    </location>
</feature>
<feature type="topological domain" description="Extracellular" evidence="1">
    <location>
        <begin position="445"/>
        <end position="470"/>
    </location>
</feature>
<feature type="glycosylation site" description="N-linked (GlcNAc...) asparagine" evidence="2">
    <location>
        <position position="454"/>
    </location>
</feature>
<feature type="glycosylation site" description="N-linked (GlcNAc...) asparagine" evidence="2">
    <location>
        <position position="464"/>
    </location>
</feature>
<feature type="glycosylation site" description="N-linked (GlcNAc...) asparagine" evidence="2">
    <location>
        <position position="467"/>
    </location>
</feature>
<feature type="splice variant" id="VSP_002018" description="In isoform D." evidence="6">
    <location>
        <begin position="1"/>
        <end position="30"/>
    </location>
</feature>
<feature type="splice variant" id="VSP_002017" description="In isoform B." evidence="6">
    <location>
        <begin position="1"/>
        <end position="27"/>
    </location>
</feature>
<feature type="splice variant" id="VSP_002016" description="In isoform E." evidence="6">
    <location>
        <begin position="1"/>
        <end position="23"/>
    </location>
</feature>
<feature type="splice variant" id="VSP_002015" description="In isoform A." evidence="6">
    <location>
        <begin position="1"/>
        <end position="18"/>
    </location>
</feature>
<feature type="splice variant" id="VSP_002019" description="In isoform A." evidence="6">
    <original>EVTPGLCQPLRRRFRRFVTAKQLYECLRPVFHVTYIHGLTSFYISCDTKTGKKAIKKTIFGYINGIMHIAMFVFAYSLTIYNNCESVASYFFRSRITYFGDLMQIVSGFIGVTVIYLTAFVPNHRLERCLQKFHTMDVQLQTVGVKIMYSKVLRFSYMVLISMFLVNVLFTGGTFSVLYSSEVAPTMALHFTFLIQHTVIAIAIALFSCFTYLVEMRLVMVN</original>
    <variation>MIRCGLDIFRGCRGRFRYWLSARDCYDSISLMVAIAFALGITPFLVRRNALGENSLEQSWYGFLNAIFRWLLLAYCYSYINLRNESLIGYFMRNHVSQISTRVHDVGGIIAAVFTFILPLLLRKYFLKSVKNMVQVDTQLERLRSPVNFNTVVGQVVLVILAVVLLDTVLLTTGLVCLAKMEVYASWQLTFIFVYELLAISITICMFCLMTRTVQRRITCLH</variation>
    <location>
        <begin position="19"/>
        <end position="240"/>
    </location>
</feature>
<feature type="splice variant" id="VSP_002022" description="In isoform E." evidence="6">
    <original>LCQPLRRRFRRFVTAKQLYECLRPVFHVTYIHGLTSFYISCDTKTGKKAIKKTIFGYINGIMHIAMFVFAYSLTIYNNCESVASYFFRSRITYFGDLMQIVSGFIGVTVIYLTAFVPNHRLERCLQKFHTMDVQLQTVGVKIMYSKVLRFSYMVLISMFLVNVLFTGGTFSVLYSSEVAPTMALHFTFLIQHTVIAIAIALFSCFTYLVEMRLVMVNK</original>
    <variation>MWLLRRSVGKSGNRPHDVYTCYRLTIFMALCLGIVPYYVSISSEGRGKLTSSYIGYINIIIRMAIYMVNSFYGAVNRDTLMSNFFLTDISNVIDALQKINGMLGIFAILLISLLNRKELLKLLATFDRLETEAFPRVGVAMHQVAANKKMNRLVIILVGSMVAYITCSFLMISLRDTTTFSISAVISFFSPHFIVCAVSFLAGNVMIKLRIYLSALNE</variation>
    <location>
        <begin position="24"/>
        <end position="241"/>
    </location>
</feature>
<feature type="splice variant" id="VSP_002020" description="In isoform B." evidence="6">
    <original>LRRRFRRFVTAKQLYECLRPVFHVTYIHGLTSFYISCDTKTGKKAIKKTIFGYINGIMHIAMFVFAYSLTIYNNCESVASYFFRSRITYFGDLMQIVSGFIGVTVIYLTAFVPNHRLERCLQKFHTMDVQLQTVGVKIMYSKVLRFSYMVLISMFLVNVLFTGGTFSVLYSSEVAPTMALHFTFLIQHTVIAIAIALFSCFTYLVEMRLVMVNK</original>
    <variation>MSALRRVRKYFISSQVYEALRPLFFLTFLYGLTPFHVVRRKMGESYLKMSCFGVFNIFIYICLCGFCYISSLRQGESIVGYFFRTEISTIGDRLQIFNGLIAGAVIYTSAILKRCKLLGTLTILHSLDTNFSNIGVRVKYSRIFRYSLLVLIFKLLILGVYFVGVFRLLVSLDVTPSFCVCMTFFLQHSVVSIAICLFCVIAFSFERRLSIINQ</variation>
    <location>
        <begin position="28"/>
        <end position="241"/>
    </location>
</feature>
<feature type="splice variant" id="VSP_002021" description="In isoform D." evidence="6">
    <original>RFRRFVTAKQLYECLRPVFHVTYIHGLTSFYISCDTKTGKKAIKKTIFGYINGIMHIAMFVFAYSLTIYNNCESVASYFFRSRITYFGDLMQIVSGFIGVTVIYLTAFVPNHRLERCLQKFHTMDVQLQTVGVKIMYSKVLRFSYMVLISMFLVNVLFTGGTFSVLYSSEVAPTMALHFTFLIQHTVIAIAIALFSCFTYLVEMRLVMVNK</original>
    <variation>MSFYFCEIFKPRDAFGAEQTLLLYTYLLGLTPFRLRGQAGERQFHLSKIGYLNAFLQLSFFSYCFLAALIEQQSIVGYFFKSEISQMGDSLQKFIGMTGMSILFLCSSIRVRLLIHIWDRISYIDDRFLNLGVCFNYPAIMRLRLLQIFLINGVQLGYLISSNWMLLGNDVRPIYTAIVAFYVPQIFLLSIVMLFNATLHRLWQHFTVLNQ</variation>
    <location>
        <begin position="31"/>
        <end position="241"/>
    </location>
</feature>
<evidence type="ECO:0000250" key="1"/>
<evidence type="ECO:0000255" key="2"/>
<evidence type="ECO:0000269" key="3">
    <source>
    </source>
</evidence>
<evidence type="ECO:0000269" key="4">
    <source>
    </source>
</evidence>
<evidence type="ECO:0000269" key="5">
    <source>
    </source>
</evidence>
<evidence type="ECO:0000305" key="6"/>
<accession>Q9VM08</accession>
<keyword id="KW-0025">Alternative splicing</keyword>
<keyword id="KW-1003">Cell membrane</keyword>
<keyword id="KW-0325">Glycoprotein</keyword>
<keyword id="KW-0472">Membrane</keyword>
<keyword id="KW-0675">Receptor</keyword>
<keyword id="KW-1185">Reference proteome</keyword>
<keyword id="KW-0807">Transducer</keyword>
<keyword id="KW-0812">Transmembrane</keyword>
<keyword id="KW-1133">Transmembrane helix</keyword>